<gene>
    <name evidence="3" type="primary">IscA1</name>
    <name evidence="4" type="ORF">PF3D7_0207200</name>
</gene>
<keyword id="KW-0004">4Fe-4S</keyword>
<keyword id="KW-0408">Iron</keyword>
<keyword id="KW-0411">Iron-sulfur</keyword>
<keyword id="KW-0479">Metal-binding</keyword>
<keyword id="KW-0496">Mitochondrion</keyword>
<keyword id="KW-1185">Reference proteome</keyword>
<feature type="chain" id="PRO_0000461960" description="Iron-sulfur assembly protein IscA1">
    <location>
        <begin position="1"/>
        <end position="160"/>
    </location>
</feature>
<protein>
    <recommendedName>
        <fullName evidence="3">Iron-sulfur assembly protein IscA1</fullName>
        <shortName evidence="2">PfIscA1</shortName>
    </recommendedName>
</protein>
<reference evidence="5" key="1">
    <citation type="journal article" date="1998" name="Science">
        <title>Chromosome 2 sequence of the human malaria parasite Plasmodium falciparum.</title>
        <authorList>
            <person name="Gardner M.J."/>
            <person name="Tettelin H."/>
            <person name="Carucci D.J."/>
            <person name="Cummings L.M."/>
            <person name="Aravind L."/>
            <person name="Koonin E.V."/>
            <person name="Shallom S.J."/>
            <person name="Mason T."/>
            <person name="Yu K."/>
            <person name="Fujii C."/>
            <person name="Pederson J."/>
            <person name="Shen K."/>
            <person name="Jing J."/>
            <person name="Aston C."/>
            <person name="Lai Z."/>
            <person name="Schwartz D.C."/>
            <person name="Pertea M."/>
            <person name="Salzberg S.L."/>
            <person name="Zhou L."/>
            <person name="Sutton G.G."/>
            <person name="Clayton R."/>
            <person name="White O."/>
            <person name="Smith H.O."/>
            <person name="Fraser C.M."/>
            <person name="Adams M.D."/>
            <person name="Venter J.C."/>
            <person name="Hoffman S.L."/>
        </authorList>
    </citation>
    <scope>NUCLEOTIDE SEQUENCE [LARGE SCALE GENOMIC DNA]</scope>
    <source>
        <strain evidence="5">3D7</strain>
    </source>
</reference>
<reference evidence="5" key="2">
    <citation type="journal article" date="2002" name="Nature">
        <title>Genome sequence of the human malaria parasite Plasmodium falciparum.</title>
        <authorList>
            <person name="Gardner M.J."/>
            <person name="Hall N."/>
            <person name="Fung E."/>
            <person name="White O."/>
            <person name="Berriman M."/>
            <person name="Hyman R.W."/>
            <person name="Carlton J.M."/>
            <person name="Pain A."/>
            <person name="Nelson K.E."/>
            <person name="Bowman S."/>
            <person name="Paulsen I.T."/>
            <person name="James K.D."/>
            <person name="Eisen J.A."/>
            <person name="Rutherford K.M."/>
            <person name="Salzberg S.L."/>
            <person name="Craig A."/>
            <person name="Kyes S."/>
            <person name="Chan M.-S."/>
            <person name="Nene V."/>
            <person name="Shallom S.J."/>
            <person name="Suh B."/>
            <person name="Peterson J."/>
            <person name="Angiuoli S."/>
            <person name="Pertea M."/>
            <person name="Allen J."/>
            <person name="Selengut J."/>
            <person name="Haft D."/>
            <person name="Mather M.W."/>
            <person name="Vaidya A.B."/>
            <person name="Martin D.M.A."/>
            <person name="Fairlamb A.H."/>
            <person name="Fraunholz M.J."/>
            <person name="Roos D.S."/>
            <person name="Ralph S.A."/>
            <person name="McFadden G.I."/>
            <person name="Cummings L.M."/>
            <person name="Subramanian G.M."/>
            <person name="Mungall C."/>
            <person name="Venter J.C."/>
            <person name="Carucci D.J."/>
            <person name="Hoffman S.L."/>
            <person name="Newbold C."/>
            <person name="Davis R.W."/>
            <person name="Fraser C.M."/>
            <person name="Barrell B.G."/>
        </authorList>
    </citation>
    <scope>NUCLEOTIDE SEQUENCE [LARGE SCALE GENOMIC DNA]</scope>
    <source>
        <strain evidence="5">3D7</strain>
    </source>
</reference>
<reference evidence="3" key="3">
    <citation type="journal article" date="2021" name="Mol. Microbiol.">
        <title>[Fe-S] biogenesis and unusual assembly of the ISC scaffold complex in the Plasmodium falciparum mitochondrion.</title>
        <authorList>
            <person name="Sadik M."/>
            <person name="Afsar M."/>
            <person name="Ramachandran R."/>
            <person name="Habib S."/>
        </authorList>
    </citation>
    <scope>FUNCTION</scope>
    <scope>SUBUNIT</scope>
    <scope>SUBCELLULAR LOCATION</scope>
</reference>
<name>ISCA1_PLAF7</name>
<organism evidence="5">
    <name type="scientific">Plasmodium falciparum (isolate 3D7)</name>
    <dbReference type="NCBI Taxonomy" id="36329"/>
    <lineage>
        <taxon>Eukaryota</taxon>
        <taxon>Sar</taxon>
        <taxon>Alveolata</taxon>
        <taxon>Apicomplexa</taxon>
        <taxon>Aconoidasida</taxon>
        <taxon>Haemosporida</taxon>
        <taxon>Plasmodiidae</taxon>
        <taxon>Plasmodium</taxon>
        <taxon>Plasmodium (Laverania)</taxon>
    </lineage>
</organism>
<comment type="function">
    <text evidence="1 2">Participates in iron-sulfur cluster formation (ISC) pathway for iron-sulfur (Fe-S) cluster biogenesis (PubMed:34032321). Can bind iron and [4Fe-4S] clusters (PubMed:34032321). May function as an iron chaperone (PubMed:34032321).</text>
</comment>
<comment type="pathway">
    <text evidence="3">Cofactor biosynthesis; iron-sulfur cluster biosynthesis.</text>
</comment>
<comment type="subunit">
    <text evidence="1">Tetramer.</text>
</comment>
<comment type="subcellular location">
    <subcellularLocation>
        <location evidence="1">Mitochondrion</location>
    </subcellularLocation>
</comment>
<comment type="similarity">
    <text evidence="3">Belongs to the HesB/IscA family.</text>
</comment>
<dbReference type="EMBL" id="LN999943">
    <property type="protein sequence ID" value="CZT98085.1"/>
    <property type="molecule type" value="Genomic_DNA"/>
</dbReference>
<dbReference type="RefSeq" id="XP_001349582.1">
    <property type="nucleotide sequence ID" value="XM_001349546.2"/>
</dbReference>
<dbReference type="SMR" id="O96161"/>
<dbReference type="FunCoup" id="O96161">
    <property type="interactions" value="125"/>
</dbReference>
<dbReference type="STRING" id="36329.O96161"/>
<dbReference type="PaxDb" id="5833-PFB0320c"/>
<dbReference type="EnsemblProtists" id="CZT98085">
    <property type="protein sequence ID" value="CZT98085"/>
    <property type="gene ID" value="PF3D7_0207200"/>
</dbReference>
<dbReference type="GeneID" id="812664"/>
<dbReference type="KEGG" id="pfa:PF3D7_0207200"/>
<dbReference type="VEuPathDB" id="PlasmoDB:PF3D7_0207200"/>
<dbReference type="HOGENOM" id="CLU_069054_1_3_1"/>
<dbReference type="InParanoid" id="O96161"/>
<dbReference type="OMA" id="SFQIHNP"/>
<dbReference type="OrthoDB" id="155597at2759"/>
<dbReference type="PhylomeDB" id="O96161"/>
<dbReference type="UniPathway" id="UPA00266"/>
<dbReference type="Proteomes" id="UP000001450">
    <property type="component" value="Chromosome 2"/>
</dbReference>
<dbReference type="GO" id="GO:0005739">
    <property type="term" value="C:mitochondrion"/>
    <property type="evidence" value="ECO:0000250"/>
    <property type="project" value="GeneDB"/>
</dbReference>
<dbReference type="GO" id="GO:0051537">
    <property type="term" value="F:2 iron, 2 sulfur cluster binding"/>
    <property type="evidence" value="ECO:0000318"/>
    <property type="project" value="GO_Central"/>
</dbReference>
<dbReference type="GO" id="GO:0051539">
    <property type="term" value="F:4 iron, 4 sulfur cluster binding"/>
    <property type="evidence" value="ECO:0000318"/>
    <property type="project" value="GO_Central"/>
</dbReference>
<dbReference type="GO" id="GO:0005506">
    <property type="term" value="F:iron ion binding"/>
    <property type="evidence" value="ECO:0000318"/>
    <property type="project" value="GO_Central"/>
</dbReference>
<dbReference type="GO" id="GO:0016226">
    <property type="term" value="P:iron-sulfur cluster assembly"/>
    <property type="evidence" value="ECO:0000318"/>
    <property type="project" value="GO_Central"/>
</dbReference>
<dbReference type="FunFam" id="2.60.300.12:FF:000006">
    <property type="entry name" value="Iron-sulfur cluster assembly 2 mitochondrial"/>
    <property type="match status" value="1"/>
</dbReference>
<dbReference type="Gene3D" id="2.60.300.12">
    <property type="entry name" value="HesB-like domain"/>
    <property type="match status" value="1"/>
</dbReference>
<dbReference type="InterPro" id="IPR000361">
    <property type="entry name" value="FeS_biogenesis"/>
</dbReference>
<dbReference type="InterPro" id="IPR016092">
    <property type="entry name" value="FeS_cluster_insertion"/>
</dbReference>
<dbReference type="InterPro" id="IPR035903">
    <property type="entry name" value="HesB-like_dom_sf"/>
</dbReference>
<dbReference type="NCBIfam" id="TIGR00049">
    <property type="entry name" value="iron-sulfur cluster assembly accessory protein"/>
    <property type="match status" value="1"/>
</dbReference>
<dbReference type="PANTHER" id="PTHR43011">
    <property type="entry name" value="IRON-SULFUR CLUSTER ASSEMBLY 2 HOMOLOG, MITOCHONDRIAL"/>
    <property type="match status" value="1"/>
</dbReference>
<dbReference type="PANTHER" id="PTHR43011:SF1">
    <property type="entry name" value="IRON-SULFUR CLUSTER ASSEMBLY 2 HOMOLOG, MITOCHONDRIAL"/>
    <property type="match status" value="1"/>
</dbReference>
<dbReference type="Pfam" id="PF01521">
    <property type="entry name" value="Fe-S_biosyn"/>
    <property type="match status" value="1"/>
</dbReference>
<dbReference type="SUPFAM" id="SSF89360">
    <property type="entry name" value="HesB-like domain"/>
    <property type="match status" value="1"/>
</dbReference>
<accession>O96161</accession>
<evidence type="ECO:0000269" key="1">
    <source>
    </source>
</evidence>
<evidence type="ECO:0000303" key="2">
    <source>
    </source>
</evidence>
<evidence type="ECO:0000305" key="3"/>
<evidence type="ECO:0000312" key="4">
    <source>
        <dbReference type="EMBL" id="CZT98085.1"/>
    </source>
</evidence>
<evidence type="ECO:0000312" key="5">
    <source>
        <dbReference type="Proteomes" id="UP000001450"/>
    </source>
</evidence>
<sequence>MLKFLSTKCKQFNSLNHIIKHKIYFPSKSNKSYFSSSVKDVEKKNKEPIIQLTNDAINKMKEINLKYKNSKALKVCVEAGGCSGFQYSFSLIDKNKIKDKEQIVYDKDCIVVIDKQVIDILKNSKIHYINNLISKKFTIENIQNISSKCSCGNSFDIDFV</sequence>
<proteinExistence type="evidence at protein level"/>